<sequence>MAIIIAAPASGTGKTTITLALLAYLKAHALRVRSFKVGPDYIDPMFHAAVTGQGCVNLDLFLTDEPFVRATYHHHCRGQQAAVIEGVMGLFDGRAGQGDFASTAHVARLLRLPVILVIDGSGAGFSVAATLYGFRRFDPRVRIAGVILNRVGSERHAQILSEAVRSQGLELLGTVYKDETIALPHRHLGLVPVEELSDFRRTQQQLAALAERSFDWQKLLPLVAIQPTAPAPARWEAEPLPPVRIAVARDRAFSFYYQDNLELLAALGAQLETFSPLAGEWPDCRGYLLGGGFPELCAGELSAKTRFWEGLRGAVARGVPLYAECGGLMVLGEALRTPEGRSHPMAGILEASCWMGKRTVLGYRVATALHSSCAVEAGRQLRGHLFHRSRMEPQPGAPLWQLDDDEQEGWVRGNLHASYLHLHWGTQAWAARRFVRRCLAVAFEGKSTPARF</sequence>
<gene>
    <name evidence="1" type="primary">cbiA</name>
    <name type="synonym">cobB</name>
    <name type="ordered locus">glr3695</name>
</gene>
<accession>Q7NF32</accession>
<evidence type="ECO:0000255" key="1">
    <source>
        <dbReference type="HAMAP-Rule" id="MF_00027"/>
    </source>
</evidence>
<feature type="chain" id="PRO_1000002292" description="Cobyrinate a,c-diamide synthase">
    <location>
        <begin position="1"/>
        <end position="452"/>
    </location>
</feature>
<feature type="domain" description="GATase cobBQ-type" evidence="1">
    <location>
        <begin position="244"/>
        <end position="429"/>
    </location>
</feature>
<feature type="active site" description="Nucleophile" evidence="1">
    <location>
        <position position="325"/>
    </location>
</feature>
<feature type="site" description="Increases nucleophilicity of active site Cys" evidence="1">
    <location>
        <position position="421"/>
    </location>
</feature>
<dbReference type="EC" id="6.3.5.11" evidence="1"/>
<dbReference type="EMBL" id="BA000045">
    <property type="protein sequence ID" value="BAC91636.1"/>
    <property type="molecule type" value="Genomic_DNA"/>
</dbReference>
<dbReference type="RefSeq" id="NP_926641.1">
    <property type="nucleotide sequence ID" value="NC_005125.1"/>
</dbReference>
<dbReference type="RefSeq" id="WP_011143684.1">
    <property type="nucleotide sequence ID" value="NC_005125.1"/>
</dbReference>
<dbReference type="SMR" id="Q7NF32"/>
<dbReference type="FunCoup" id="Q7NF32">
    <property type="interactions" value="90"/>
</dbReference>
<dbReference type="STRING" id="251221.gene:10761211"/>
<dbReference type="EnsemblBacteria" id="BAC91636">
    <property type="protein sequence ID" value="BAC91636"/>
    <property type="gene ID" value="BAC91636"/>
</dbReference>
<dbReference type="KEGG" id="gvi:glr3695"/>
<dbReference type="PATRIC" id="fig|251221.4.peg.3729"/>
<dbReference type="eggNOG" id="COG1797">
    <property type="taxonomic scope" value="Bacteria"/>
</dbReference>
<dbReference type="HOGENOM" id="CLU_022752_2_0_3"/>
<dbReference type="InParanoid" id="Q7NF32"/>
<dbReference type="OrthoDB" id="9764035at2"/>
<dbReference type="PhylomeDB" id="Q7NF32"/>
<dbReference type="UniPathway" id="UPA00148">
    <property type="reaction ID" value="UER00231"/>
</dbReference>
<dbReference type="Proteomes" id="UP000000557">
    <property type="component" value="Chromosome"/>
</dbReference>
<dbReference type="GO" id="GO:0005524">
    <property type="term" value="F:ATP binding"/>
    <property type="evidence" value="ECO:0007669"/>
    <property type="project" value="UniProtKB-UniRule"/>
</dbReference>
<dbReference type="GO" id="GO:0042242">
    <property type="term" value="F:cobyrinic acid a,c-diamide synthase activity"/>
    <property type="evidence" value="ECO:0007669"/>
    <property type="project" value="UniProtKB-UniRule"/>
</dbReference>
<dbReference type="GO" id="GO:0009236">
    <property type="term" value="P:cobalamin biosynthetic process"/>
    <property type="evidence" value="ECO:0007669"/>
    <property type="project" value="UniProtKB-UniRule"/>
</dbReference>
<dbReference type="CDD" id="cd05388">
    <property type="entry name" value="CobB_N"/>
    <property type="match status" value="1"/>
</dbReference>
<dbReference type="CDD" id="cd03130">
    <property type="entry name" value="GATase1_CobB"/>
    <property type="match status" value="1"/>
</dbReference>
<dbReference type="Gene3D" id="3.40.50.880">
    <property type="match status" value="1"/>
</dbReference>
<dbReference type="Gene3D" id="3.40.50.300">
    <property type="entry name" value="P-loop containing nucleotide triphosphate hydrolases"/>
    <property type="match status" value="1"/>
</dbReference>
<dbReference type="HAMAP" id="MF_00027">
    <property type="entry name" value="CobB_CbiA"/>
    <property type="match status" value="1"/>
</dbReference>
<dbReference type="InterPro" id="IPR004484">
    <property type="entry name" value="CbiA/CobB_synth"/>
</dbReference>
<dbReference type="InterPro" id="IPR029062">
    <property type="entry name" value="Class_I_gatase-like"/>
</dbReference>
<dbReference type="InterPro" id="IPR002586">
    <property type="entry name" value="CobQ/CobB/MinD/ParA_Nub-bd_dom"/>
</dbReference>
<dbReference type="InterPro" id="IPR011698">
    <property type="entry name" value="GATase_3"/>
</dbReference>
<dbReference type="InterPro" id="IPR027417">
    <property type="entry name" value="P-loop_NTPase"/>
</dbReference>
<dbReference type="NCBIfam" id="TIGR00379">
    <property type="entry name" value="cobB"/>
    <property type="match status" value="1"/>
</dbReference>
<dbReference type="NCBIfam" id="NF002204">
    <property type="entry name" value="PRK01077.1"/>
    <property type="match status" value="1"/>
</dbReference>
<dbReference type="PANTHER" id="PTHR43873">
    <property type="entry name" value="COBYRINATE A,C-DIAMIDE SYNTHASE"/>
    <property type="match status" value="1"/>
</dbReference>
<dbReference type="PANTHER" id="PTHR43873:SF1">
    <property type="entry name" value="COBYRINATE A,C-DIAMIDE SYNTHASE"/>
    <property type="match status" value="1"/>
</dbReference>
<dbReference type="Pfam" id="PF01656">
    <property type="entry name" value="CbiA"/>
    <property type="match status" value="1"/>
</dbReference>
<dbReference type="Pfam" id="PF07685">
    <property type="entry name" value="GATase_3"/>
    <property type="match status" value="1"/>
</dbReference>
<dbReference type="SUPFAM" id="SSF52317">
    <property type="entry name" value="Class I glutamine amidotransferase-like"/>
    <property type="match status" value="1"/>
</dbReference>
<dbReference type="SUPFAM" id="SSF52540">
    <property type="entry name" value="P-loop containing nucleoside triphosphate hydrolases"/>
    <property type="match status" value="1"/>
</dbReference>
<dbReference type="PROSITE" id="PS51274">
    <property type="entry name" value="GATASE_COBBQ"/>
    <property type="match status" value="1"/>
</dbReference>
<name>CBIA_GLOVI</name>
<protein>
    <recommendedName>
        <fullName evidence="1">Cobyrinate a,c-diamide synthase</fullName>
        <ecNumber evidence="1">6.3.5.11</ecNumber>
    </recommendedName>
    <alternativeName>
        <fullName evidence="1">Cobyrinic acid a,c-diamide synthetase</fullName>
    </alternativeName>
</protein>
<reference key="1">
    <citation type="journal article" date="2003" name="DNA Res.">
        <title>Complete genome structure of Gloeobacter violaceus PCC 7421, a cyanobacterium that lacks thylakoids.</title>
        <authorList>
            <person name="Nakamura Y."/>
            <person name="Kaneko T."/>
            <person name="Sato S."/>
            <person name="Mimuro M."/>
            <person name="Miyashita H."/>
            <person name="Tsuchiya T."/>
            <person name="Sasamoto S."/>
            <person name="Watanabe A."/>
            <person name="Kawashima K."/>
            <person name="Kishida Y."/>
            <person name="Kiyokawa C."/>
            <person name="Kohara M."/>
            <person name="Matsumoto M."/>
            <person name="Matsuno A."/>
            <person name="Nakazaki N."/>
            <person name="Shimpo S."/>
            <person name="Takeuchi C."/>
            <person name="Yamada M."/>
            <person name="Tabata S."/>
        </authorList>
    </citation>
    <scope>NUCLEOTIDE SEQUENCE [LARGE SCALE GENOMIC DNA]</scope>
    <source>
        <strain>ATCC 29082 / PCC 7421</strain>
    </source>
</reference>
<proteinExistence type="inferred from homology"/>
<organism>
    <name type="scientific">Gloeobacter violaceus (strain ATCC 29082 / PCC 7421)</name>
    <dbReference type="NCBI Taxonomy" id="251221"/>
    <lineage>
        <taxon>Bacteria</taxon>
        <taxon>Bacillati</taxon>
        <taxon>Cyanobacteriota</taxon>
        <taxon>Cyanophyceae</taxon>
        <taxon>Gloeobacterales</taxon>
        <taxon>Gloeobacteraceae</taxon>
        <taxon>Gloeobacter</taxon>
    </lineage>
</organism>
<keyword id="KW-0067">ATP-binding</keyword>
<keyword id="KW-0169">Cobalamin biosynthesis</keyword>
<keyword id="KW-0315">Glutamine amidotransferase</keyword>
<keyword id="KW-0436">Ligase</keyword>
<keyword id="KW-0460">Magnesium</keyword>
<keyword id="KW-0547">Nucleotide-binding</keyword>
<keyword id="KW-1185">Reference proteome</keyword>
<comment type="function">
    <text evidence="1">Catalyzes the ATP-dependent amidation of the two carboxylate groups at positions a and c of cobyrinate, using either L-glutamine or ammonia as the nitrogen source.</text>
</comment>
<comment type="catalytic activity">
    <reaction evidence="1">
        <text>cob(II)yrinate + 2 L-glutamine + 2 ATP + 2 H2O = cob(II)yrinate a,c diamide + 2 L-glutamate + 2 ADP + 2 phosphate + 2 H(+)</text>
        <dbReference type="Rhea" id="RHEA:26289"/>
        <dbReference type="ChEBI" id="CHEBI:15377"/>
        <dbReference type="ChEBI" id="CHEBI:15378"/>
        <dbReference type="ChEBI" id="CHEBI:29985"/>
        <dbReference type="ChEBI" id="CHEBI:30616"/>
        <dbReference type="ChEBI" id="CHEBI:43474"/>
        <dbReference type="ChEBI" id="CHEBI:58359"/>
        <dbReference type="ChEBI" id="CHEBI:58537"/>
        <dbReference type="ChEBI" id="CHEBI:58894"/>
        <dbReference type="ChEBI" id="CHEBI:456216"/>
        <dbReference type="EC" id="6.3.5.11"/>
    </reaction>
</comment>
<comment type="cofactor">
    <cofactor evidence="1">
        <name>Mg(2+)</name>
        <dbReference type="ChEBI" id="CHEBI:18420"/>
    </cofactor>
</comment>
<comment type="pathway">
    <text evidence="1">Cofactor biosynthesis; adenosylcobalamin biosynthesis; cob(II)yrinate a,c-diamide from sirohydrochlorin (anaerobic route): step 10/10.</text>
</comment>
<comment type="domain">
    <text evidence="1">Comprises of two domains. The C-terminal domain contains the binding site for glutamine and catalyzes the hydrolysis of this substrate to glutamate and ammonia. The N-terminal domain is anticipated to bind ATP and cobyrinate and catalyzes the ultimate synthesis of the diamide product. The ammonia produced via the glutaminase domain is probably translocated to the adjacent domain via a molecular tunnel, where it reacts with an activated intermediate.</text>
</comment>
<comment type="miscellaneous">
    <text evidence="1">The a and c carboxylates of cobyrinate are activated for nucleophilic attack via formation of a phosphorylated intermediate by ATP. CbiA catalyzes first the amidation of the c-carboxylate, and then that of the a-carboxylate.</text>
</comment>
<comment type="similarity">
    <text evidence="1">Belongs to the CobB/CbiA family.</text>
</comment>